<name>BIOH_STRM5</name>
<reference key="1">
    <citation type="submission" date="2008-06" db="EMBL/GenBank/DDBJ databases">
        <title>Complete sequence of Stenotrophomonas maltophilia R551-3.</title>
        <authorList>
            <consortium name="US DOE Joint Genome Institute"/>
            <person name="Lucas S."/>
            <person name="Copeland A."/>
            <person name="Lapidus A."/>
            <person name="Glavina del Rio T."/>
            <person name="Dalin E."/>
            <person name="Tice H."/>
            <person name="Pitluck S."/>
            <person name="Chain P."/>
            <person name="Malfatti S."/>
            <person name="Shin M."/>
            <person name="Vergez L."/>
            <person name="Lang D."/>
            <person name="Schmutz J."/>
            <person name="Larimer F."/>
            <person name="Land M."/>
            <person name="Hauser L."/>
            <person name="Kyrpides N."/>
            <person name="Mikhailova N."/>
            <person name="Taghavi S."/>
            <person name="Monchy S."/>
            <person name="Newman L."/>
            <person name="Vangronsveld J."/>
            <person name="van der Lelie D."/>
            <person name="Richardson P."/>
        </authorList>
    </citation>
    <scope>NUCLEOTIDE SEQUENCE [LARGE SCALE GENOMIC DNA]</scope>
    <source>
        <strain>R551-3</strain>
    </source>
</reference>
<proteinExistence type="inferred from homology"/>
<comment type="function">
    <text evidence="1">The physiological role of BioH is to remove the methyl group introduced by BioC when the pimeloyl moiety is complete. It allows to synthesize pimeloyl-ACP via the fatty acid synthetic pathway through the hydrolysis of the ester bonds of pimeloyl-ACP esters.</text>
</comment>
<comment type="catalytic activity">
    <reaction evidence="1">
        <text>6-carboxyhexanoyl-[ACP] methyl ester + H2O = 6-carboxyhexanoyl-[ACP] + methanol + H(+)</text>
        <dbReference type="Rhea" id="RHEA:42700"/>
        <dbReference type="Rhea" id="RHEA-COMP:9955"/>
        <dbReference type="Rhea" id="RHEA-COMP:10186"/>
        <dbReference type="ChEBI" id="CHEBI:15377"/>
        <dbReference type="ChEBI" id="CHEBI:15378"/>
        <dbReference type="ChEBI" id="CHEBI:17790"/>
        <dbReference type="ChEBI" id="CHEBI:78846"/>
        <dbReference type="ChEBI" id="CHEBI:82735"/>
        <dbReference type="EC" id="3.1.1.85"/>
    </reaction>
</comment>
<comment type="pathway">
    <text evidence="1">Cofactor biosynthesis; biotin biosynthesis.</text>
</comment>
<comment type="subunit">
    <text evidence="1">Monomer.</text>
</comment>
<comment type="subcellular location">
    <subcellularLocation>
        <location evidence="1">Cytoplasm</location>
    </subcellularLocation>
</comment>
<comment type="similarity">
    <text evidence="1">Belongs to the AB hydrolase superfamily. Carboxylesterase BioH family.</text>
</comment>
<feature type="chain" id="PRO_1000140006" description="Pimeloyl-[acyl-carrier protein] methyl ester esterase">
    <location>
        <begin position="1"/>
        <end position="259"/>
    </location>
</feature>
<feature type="active site" description="Nucleophile" evidence="1">
    <location>
        <position position="78"/>
    </location>
</feature>
<feature type="active site" evidence="1">
    <location>
        <position position="203"/>
    </location>
</feature>
<feature type="active site" evidence="1">
    <location>
        <position position="231"/>
    </location>
</feature>
<feature type="binding site" evidence="1">
    <location>
        <position position="18"/>
    </location>
    <ligand>
        <name>substrate</name>
    </ligand>
</feature>
<feature type="binding site" evidence="1">
    <location>
        <begin position="78"/>
        <end position="79"/>
    </location>
    <ligand>
        <name>substrate</name>
    </ligand>
</feature>
<feature type="binding site" evidence="1">
    <location>
        <begin position="139"/>
        <end position="143"/>
    </location>
    <ligand>
        <name>substrate</name>
    </ligand>
</feature>
<feature type="binding site" evidence="1">
    <location>
        <position position="231"/>
    </location>
    <ligand>
        <name>substrate</name>
    </ligand>
</feature>
<accession>B4SM83</accession>
<protein>
    <recommendedName>
        <fullName evidence="1">Pimeloyl-[acyl-carrier protein] methyl ester esterase</fullName>
        <ecNumber evidence="1">3.1.1.85</ecNumber>
    </recommendedName>
    <alternativeName>
        <fullName evidence="1">Biotin synthesis protein BioH</fullName>
    </alternativeName>
    <alternativeName>
        <fullName evidence="1">Carboxylesterase BioH</fullName>
    </alternativeName>
</protein>
<gene>
    <name evidence="1" type="primary">bioH</name>
    <name type="ordered locus">Smal_3829</name>
</gene>
<organism>
    <name type="scientific">Stenotrophomonas maltophilia (strain R551-3)</name>
    <dbReference type="NCBI Taxonomy" id="391008"/>
    <lineage>
        <taxon>Bacteria</taxon>
        <taxon>Pseudomonadati</taxon>
        <taxon>Pseudomonadota</taxon>
        <taxon>Gammaproteobacteria</taxon>
        <taxon>Lysobacterales</taxon>
        <taxon>Lysobacteraceae</taxon>
        <taxon>Stenotrophomonas</taxon>
        <taxon>Stenotrophomonas maltophilia group</taxon>
    </lineage>
</organism>
<dbReference type="EC" id="3.1.1.85" evidence="1"/>
<dbReference type="EMBL" id="CP001111">
    <property type="protein sequence ID" value="ACF53528.1"/>
    <property type="molecule type" value="Genomic_DNA"/>
</dbReference>
<dbReference type="RefSeq" id="WP_012512400.1">
    <property type="nucleotide sequence ID" value="NC_011071.1"/>
</dbReference>
<dbReference type="SMR" id="B4SM83"/>
<dbReference type="STRING" id="391008.Smal_3829"/>
<dbReference type="ESTHER" id="strm5-bioh">
    <property type="family name" value="BioH"/>
</dbReference>
<dbReference type="KEGG" id="smt:Smal_3829"/>
<dbReference type="eggNOG" id="COG2267">
    <property type="taxonomic scope" value="Bacteria"/>
</dbReference>
<dbReference type="HOGENOM" id="CLU_020336_12_2_6"/>
<dbReference type="OrthoDB" id="9780744at2"/>
<dbReference type="UniPathway" id="UPA00078"/>
<dbReference type="Proteomes" id="UP000001867">
    <property type="component" value="Chromosome"/>
</dbReference>
<dbReference type="GO" id="GO:0005737">
    <property type="term" value="C:cytoplasm"/>
    <property type="evidence" value="ECO:0007669"/>
    <property type="project" value="UniProtKB-SubCell"/>
</dbReference>
<dbReference type="GO" id="GO:0090499">
    <property type="term" value="F:pimelyl-[acyl-carrier protein] methyl ester esterase activity"/>
    <property type="evidence" value="ECO:0007669"/>
    <property type="project" value="UniProtKB-EC"/>
</dbReference>
<dbReference type="GO" id="GO:0009102">
    <property type="term" value="P:biotin biosynthetic process"/>
    <property type="evidence" value="ECO:0007669"/>
    <property type="project" value="UniProtKB-UniRule"/>
</dbReference>
<dbReference type="Gene3D" id="3.40.50.1820">
    <property type="entry name" value="alpha/beta hydrolase"/>
    <property type="match status" value="1"/>
</dbReference>
<dbReference type="HAMAP" id="MF_01260">
    <property type="entry name" value="Carboxylester"/>
    <property type="match status" value="1"/>
</dbReference>
<dbReference type="InterPro" id="IPR000073">
    <property type="entry name" value="AB_hydrolase_1"/>
</dbReference>
<dbReference type="InterPro" id="IPR029058">
    <property type="entry name" value="AB_hydrolase_fold"/>
</dbReference>
<dbReference type="InterPro" id="IPR010076">
    <property type="entry name" value="BioH"/>
</dbReference>
<dbReference type="InterPro" id="IPR050228">
    <property type="entry name" value="Carboxylesterase_BioH"/>
</dbReference>
<dbReference type="NCBIfam" id="TIGR01738">
    <property type="entry name" value="bioH"/>
    <property type="match status" value="1"/>
</dbReference>
<dbReference type="PANTHER" id="PTHR43194">
    <property type="entry name" value="HYDROLASE ALPHA/BETA FOLD FAMILY"/>
    <property type="match status" value="1"/>
</dbReference>
<dbReference type="PANTHER" id="PTHR43194:SF5">
    <property type="entry name" value="PIMELOYL-[ACYL-CARRIER PROTEIN] METHYL ESTER ESTERASE"/>
    <property type="match status" value="1"/>
</dbReference>
<dbReference type="Pfam" id="PF12697">
    <property type="entry name" value="Abhydrolase_6"/>
    <property type="match status" value="1"/>
</dbReference>
<dbReference type="SUPFAM" id="SSF53474">
    <property type="entry name" value="alpha/beta-Hydrolases"/>
    <property type="match status" value="1"/>
</dbReference>
<keyword id="KW-0093">Biotin biosynthesis</keyword>
<keyword id="KW-0963">Cytoplasm</keyword>
<keyword id="KW-0378">Hydrolase</keyword>
<keyword id="KW-0719">Serine esterase</keyword>
<sequence>MHIEVTGRGPDLVLIHGWALQGGVFAPLVQRLADQFTLHLVDLPGHGHSRDDTTPLRLPFVVNAIAAATPPAVWCGWSLGGLFALHAAATLPKVRGLAMIAATPRFVRGEDWPHAVEPAVFEQFGRELASDFGGTLERFLALDVMGSAHAREELRTLRQRLVERGAPTERALLEGLRLLESTDLRGALPTLGKPSLWIAGQRDRLVSPAAMQAAAALALGGQALTIAHGGHAPFLGHADEVAAALQHFVAGLSPADGGQ</sequence>
<evidence type="ECO:0000255" key="1">
    <source>
        <dbReference type="HAMAP-Rule" id="MF_01260"/>
    </source>
</evidence>